<protein>
    <recommendedName>
        <fullName>Phycobiliprotein ApcE</fullName>
        <ecNumber>4.-.-.-</ecNumber>
    </recommendedName>
    <alternativeName>
        <fullName>Anchor polypeptide</fullName>
    </alternativeName>
    <alternativeName>
        <fullName>PBS-anchor protein</fullName>
    </alternativeName>
    <alternativeName>
        <fullName>Phycobilisome linker polypeptide</fullName>
    </alternativeName>
</protein>
<evidence type="ECO:0000250" key="1"/>
<evidence type="ECO:0000255" key="2"/>
<evidence type="ECO:0000255" key="3">
    <source>
        <dbReference type="PROSITE-ProRule" id="PRU00775"/>
    </source>
</evidence>
<evidence type="ECO:0000305" key="4"/>
<organism>
    <name type="scientific">Galdieria sulphuraria</name>
    <name type="common">Red alga</name>
    <dbReference type="NCBI Taxonomy" id="130081"/>
    <lineage>
        <taxon>Eukaryota</taxon>
        <taxon>Rhodophyta</taxon>
        <taxon>Bangiophyceae</taxon>
        <taxon>Galdieriales</taxon>
        <taxon>Galdieriaceae</taxon>
        <taxon>Galdieria</taxon>
    </lineage>
</organism>
<proteinExistence type="inferred from homology"/>
<name>APCE_GALSU</name>
<feature type="chain" id="PRO_0000199261" description="Phycobiliprotein ApcE">
    <location>
        <begin position="1"/>
        <end position="863"/>
    </location>
</feature>
<feature type="domain" description="PBS-linker 1" evidence="3">
    <location>
        <begin position="235"/>
        <end position="414"/>
    </location>
</feature>
<feature type="domain" description="PBS-linker 2" evidence="3">
    <location>
        <begin position="473"/>
        <end position="652"/>
    </location>
</feature>
<feature type="domain" description="PBS-linker 3" evidence="3">
    <location>
        <begin position="671"/>
        <end position="852"/>
    </location>
</feature>
<feature type="binding site" description="covalent" evidence="2">
    <location>
        <position position="178"/>
    </location>
    <ligand>
        <name>(2R,3E)-phycocyanobilin</name>
        <dbReference type="ChEBI" id="CHEBI:85275"/>
    </ligand>
</feature>
<keyword id="KW-0042">Antenna complex</keyword>
<keyword id="KW-0089">Bile pigment</keyword>
<keyword id="KW-0150">Chloroplast</keyword>
<keyword id="KW-0157">Chromophore</keyword>
<keyword id="KW-0249">Electron transport</keyword>
<keyword id="KW-0456">Lyase</keyword>
<keyword id="KW-0472">Membrane</keyword>
<keyword id="KW-0602">Photosynthesis</keyword>
<keyword id="KW-0605">Phycobilisome</keyword>
<keyword id="KW-0934">Plastid</keyword>
<keyword id="KW-0677">Repeat</keyword>
<keyword id="KW-0793">Thylakoid</keyword>
<keyword id="KW-0813">Transport</keyword>
<comment type="function">
    <text evidence="1">This protein is postulated to act both as terminal energy acceptor and as a linker polypeptide that stabilizes the phycobilisome architecture. May have intrinsic bilin lyase activity (By similarity).</text>
</comment>
<comment type="subcellular location">
    <subcellularLocation>
        <location evidence="1">Plastid</location>
        <location evidence="1">Chloroplast thylakoid membrane</location>
        <topology evidence="1">Peripheral membrane protein</topology>
        <orientation evidence="1">Stromal side</orientation>
    </subcellularLocation>
</comment>
<comment type="PTM">
    <text evidence="4">Contains one covalently linked bilin chromophore. This protein autochromophorylates (Potential).</text>
</comment>
<comment type="similarity">
    <text evidence="3">Belongs to the phycobilisome linker protein family.</text>
</comment>
<accession>P35911</accession>
<sequence length="863" mass="99758">MTIRKNSGLVPINIQLYKTTPIQTILQAEQQDRFLQPAELSQLLSYMKSGVLRLEIAETLSRNSTNIVNAASNRIFVGGSPLSYLEKPEDSIDISSIDTKNTKFSFSNIFKNLFSNEDSIPAGFKPITIVKYGSNKMRKSLRDLDWFLRYLSYAIIIGDPNILAVNIKGLREIIENACSTAATIVALRTMKRTCIKLFSSNPEAESIVNQYFNVIIQEFEAPSLSDRIRKRNSADLQGLTLPQTYFLSSSTQFKYAMKPNLSVEEKNEIIRAAYRQVFERDIVKAYSLSLTKMESRVKIGQISMKEFIRALGKSSLYRKEFFDSFSNSRVVELAFRHFLGRGISSLEEFQKYFAIVSQEGLGGLVDTLINSKEYSDYFGEETVPYLRSLGEEAQECRNWGVQIKLFNYSARFQKKPQFITLFKDYQTPLPDQHPYGHSNDPLAIQFGAIFSKKTSTAFVNKDVRRILIYKGAPIENQLSRPLKLNAYKELNSYNLQIIKQSDNLTENIIRACYLRVFGRNPYTEEKLILQPIENQFRDKCISIKELIRALSKSNLFRKLYWTPFYVCKSIEYIHIRLLGRPTYGRKEINNYFNISAQGGFYKLIDAIIDSEEYSQVFGDNIIPYERYLTPYNLSLGTLRVSSIREKFKKLQPPVDKKFVELGRVKEIRSKNNIILKLNQGVSKRREQTVIFARHINNSQSSLEQIIKAAYRQVFERDIDPYTIGREFYSIETLFYAGSLSVKEFIEHLGQSELYRKEFFEPYPNTKVIELGTKHFLGRAPKDQGEIRLYNQILRSQGLKSFVKSLINSQEYIEIFGDSIVPYRRFPTLPAGTFPNTDILYKNLTKQKFFILMPSYKNTKLLSV</sequence>
<dbReference type="EC" id="4.-.-.-"/>
<dbReference type="EMBL" id="X74548">
    <property type="protein sequence ID" value="CAA52640.1"/>
    <property type="molecule type" value="Genomic_DNA"/>
</dbReference>
<dbReference type="PIR" id="S37088">
    <property type="entry name" value="S37088"/>
</dbReference>
<dbReference type="SMR" id="P35911"/>
<dbReference type="GO" id="GO:0009535">
    <property type="term" value="C:chloroplast thylakoid membrane"/>
    <property type="evidence" value="ECO:0007669"/>
    <property type="project" value="UniProtKB-SubCell"/>
</dbReference>
<dbReference type="GO" id="GO:0030089">
    <property type="term" value="C:phycobilisome"/>
    <property type="evidence" value="ECO:0007669"/>
    <property type="project" value="UniProtKB-KW"/>
</dbReference>
<dbReference type="GO" id="GO:0016829">
    <property type="term" value="F:lyase activity"/>
    <property type="evidence" value="ECO:0007669"/>
    <property type="project" value="UniProtKB-KW"/>
</dbReference>
<dbReference type="GO" id="GO:0015979">
    <property type="term" value="P:photosynthesis"/>
    <property type="evidence" value="ECO:0007669"/>
    <property type="project" value="UniProtKB-KW"/>
</dbReference>
<dbReference type="CDD" id="cd12128">
    <property type="entry name" value="PBP_PBS-LCM"/>
    <property type="match status" value="1"/>
</dbReference>
<dbReference type="Gene3D" id="1.10.3130.20">
    <property type="entry name" value="Phycobilisome linker domain"/>
    <property type="match status" value="3"/>
</dbReference>
<dbReference type="Gene3D" id="1.10.490.20">
    <property type="entry name" value="Phycocyanins"/>
    <property type="match status" value="1"/>
</dbReference>
<dbReference type="InterPro" id="IPR009050">
    <property type="entry name" value="Globin-like_sf"/>
</dbReference>
<dbReference type="InterPro" id="IPR001297">
    <property type="entry name" value="PBS_linker_dom"/>
</dbReference>
<dbReference type="InterPro" id="IPR038255">
    <property type="entry name" value="PBS_linker_sf"/>
</dbReference>
<dbReference type="InterPro" id="IPR012128">
    <property type="entry name" value="Phycobilisome_asu/bsu"/>
</dbReference>
<dbReference type="InterPro" id="IPR038719">
    <property type="entry name" value="Phycobilisome_asu/bsu_sf"/>
</dbReference>
<dbReference type="PANTHER" id="PTHR34011:SF6">
    <property type="entry name" value="PHYCOBILIPROTEIN APCE"/>
    <property type="match status" value="1"/>
</dbReference>
<dbReference type="PANTHER" id="PTHR34011">
    <property type="entry name" value="PHYCOBILISOME 32.1 KDA LINKER POLYPEPTIDE, PHYCOCYANIN-ASSOCIATED, ROD 2-RELATED"/>
    <property type="match status" value="1"/>
</dbReference>
<dbReference type="Pfam" id="PF00427">
    <property type="entry name" value="PBS_linker_poly"/>
    <property type="match status" value="3"/>
</dbReference>
<dbReference type="Pfam" id="PF00502">
    <property type="entry name" value="Phycobilisome"/>
    <property type="match status" value="2"/>
</dbReference>
<dbReference type="SUPFAM" id="SSF46458">
    <property type="entry name" value="Globin-like"/>
    <property type="match status" value="1"/>
</dbReference>
<dbReference type="PROSITE" id="PS51445">
    <property type="entry name" value="PBS_LINKER"/>
    <property type="match status" value="3"/>
</dbReference>
<gene>
    <name type="primary">apcE</name>
</gene>
<geneLocation type="chloroplast"/>
<reference key="1">
    <citation type="submission" date="1993-08" db="EMBL/GenBank/DDBJ databases">
        <authorList>
            <person name="Kostrzewa M."/>
            <person name="Zetsche K."/>
        </authorList>
    </citation>
    <scope>NUCLEOTIDE SEQUENCE [GENOMIC DNA]</scope>
    <source>
        <strain>14-1-1 / Isolate 107.79/Goettingen</strain>
    </source>
</reference>